<evidence type="ECO:0000255" key="1">
    <source>
        <dbReference type="HAMAP-Rule" id="MF_00071"/>
    </source>
</evidence>
<gene>
    <name evidence="1" type="primary">lepA</name>
    <name type="ordered locus">PM0063</name>
</gene>
<feature type="chain" id="PRO_0000176315" description="Elongation factor 4">
    <location>
        <begin position="1"/>
        <end position="598"/>
    </location>
</feature>
<feature type="domain" description="tr-type G">
    <location>
        <begin position="2"/>
        <end position="184"/>
    </location>
</feature>
<feature type="binding site" evidence="1">
    <location>
        <begin position="14"/>
        <end position="19"/>
    </location>
    <ligand>
        <name>GTP</name>
        <dbReference type="ChEBI" id="CHEBI:37565"/>
    </ligand>
</feature>
<feature type="binding site" evidence="1">
    <location>
        <begin position="131"/>
        <end position="134"/>
    </location>
    <ligand>
        <name>GTP</name>
        <dbReference type="ChEBI" id="CHEBI:37565"/>
    </ligand>
</feature>
<sequence length="598" mass="66211">MKNIRNFSIIAHIDHGKSTLSDRLIQTCGGLSDREMEAQVLDSMDLERERGITIKAQSVTLNYKAKDGETYQLNFIDTPGHVDFSYEVSRSLAACEGALLVVDAGQGVEAQTLANCYTAIEMNLEVVPILNKIDLPAADPERVAEEIEDIVGIDAMEAVRCSAKTGVGIEDVLEEIVHKIPAPEGDPNAPLQALIIDSWFDNYLGVVSLVRIKNGTLRKGDKIKVMSTGQSYNVDRLGIFTPKQVDTTILNCGEVGWVVCAIKDILGAPVGDTLTSHNNPASSVLPGFKKVKPQVYAGLFPISSDDYEAFRDALGKLSLNDASLFYEPENSTALGFGFRCGFLGLLHMEIIQERLEREYDLDLITTAPTVVYEVEKTDGEVIYVDSPSKLPPLNNITEIREPIAECNMLLPQTYLGNVITLCVEKRGVQTNMVYHGNQVALTYEIPMGEVVLDFFDRLKSTSRGYASLDYGFKRFQAADMVRVDIMINGERVDALALIVHKDNAPYRGRELVEKMRELIPRQQFDIAIQAAIGNHIIARSTVKQLRKNVLAKCYGGDVSRKKKLLQKQKEGKKRMKSLGNVEVPQEAFLAILHVGKDK</sequence>
<protein>
    <recommendedName>
        <fullName evidence="1">Elongation factor 4</fullName>
        <shortName evidence="1">EF-4</shortName>
        <ecNumber evidence="1">3.6.5.n1</ecNumber>
    </recommendedName>
    <alternativeName>
        <fullName evidence="1">Ribosomal back-translocase LepA</fullName>
    </alternativeName>
</protein>
<dbReference type="EC" id="3.6.5.n1" evidence="1"/>
<dbReference type="EMBL" id="AE004439">
    <property type="protein sequence ID" value="AAK02147.1"/>
    <property type="molecule type" value="Genomic_DNA"/>
</dbReference>
<dbReference type="RefSeq" id="WP_005722312.1">
    <property type="nucleotide sequence ID" value="NC_002663.1"/>
</dbReference>
<dbReference type="SMR" id="P57806"/>
<dbReference type="STRING" id="272843.PM0063"/>
<dbReference type="EnsemblBacteria" id="AAK02147">
    <property type="protein sequence ID" value="AAK02147"/>
    <property type="gene ID" value="PM0063"/>
</dbReference>
<dbReference type="GeneID" id="77207402"/>
<dbReference type="KEGG" id="pmu:PM0063"/>
<dbReference type="HOGENOM" id="CLU_009995_3_3_6"/>
<dbReference type="OrthoDB" id="9804431at2"/>
<dbReference type="Proteomes" id="UP000000809">
    <property type="component" value="Chromosome"/>
</dbReference>
<dbReference type="GO" id="GO:0005886">
    <property type="term" value="C:plasma membrane"/>
    <property type="evidence" value="ECO:0007669"/>
    <property type="project" value="UniProtKB-SubCell"/>
</dbReference>
<dbReference type="GO" id="GO:0005525">
    <property type="term" value="F:GTP binding"/>
    <property type="evidence" value="ECO:0007669"/>
    <property type="project" value="UniProtKB-UniRule"/>
</dbReference>
<dbReference type="GO" id="GO:0003924">
    <property type="term" value="F:GTPase activity"/>
    <property type="evidence" value="ECO:0007669"/>
    <property type="project" value="UniProtKB-UniRule"/>
</dbReference>
<dbReference type="GO" id="GO:0097216">
    <property type="term" value="F:guanosine tetraphosphate binding"/>
    <property type="evidence" value="ECO:0007669"/>
    <property type="project" value="UniProtKB-ARBA"/>
</dbReference>
<dbReference type="GO" id="GO:0043022">
    <property type="term" value="F:ribosome binding"/>
    <property type="evidence" value="ECO:0007669"/>
    <property type="project" value="UniProtKB-UniRule"/>
</dbReference>
<dbReference type="GO" id="GO:0003746">
    <property type="term" value="F:translation elongation factor activity"/>
    <property type="evidence" value="ECO:0007669"/>
    <property type="project" value="UniProtKB-UniRule"/>
</dbReference>
<dbReference type="GO" id="GO:0045727">
    <property type="term" value="P:positive regulation of translation"/>
    <property type="evidence" value="ECO:0007669"/>
    <property type="project" value="UniProtKB-UniRule"/>
</dbReference>
<dbReference type="CDD" id="cd03699">
    <property type="entry name" value="EF4_II"/>
    <property type="match status" value="1"/>
</dbReference>
<dbReference type="CDD" id="cd16260">
    <property type="entry name" value="EF4_III"/>
    <property type="match status" value="1"/>
</dbReference>
<dbReference type="CDD" id="cd01890">
    <property type="entry name" value="LepA"/>
    <property type="match status" value="1"/>
</dbReference>
<dbReference type="CDD" id="cd03709">
    <property type="entry name" value="lepA_C"/>
    <property type="match status" value="1"/>
</dbReference>
<dbReference type="FunFam" id="3.30.70.240:FF:000005">
    <property type="entry name" value="Elongation factor 4"/>
    <property type="match status" value="1"/>
</dbReference>
<dbReference type="FunFam" id="3.40.50.300:FF:000078">
    <property type="entry name" value="Elongation factor 4"/>
    <property type="match status" value="1"/>
</dbReference>
<dbReference type="FunFam" id="2.40.30.10:FF:000015">
    <property type="entry name" value="Translation factor GUF1, mitochondrial"/>
    <property type="match status" value="1"/>
</dbReference>
<dbReference type="FunFam" id="3.30.70.2570:FF:000001">
    <property type="entry name" value="Translation factor GUF1, mitochondrial"/>
    <property type="match status" value="1"/>
</dbReference>
<dbReference type="FunFam" id="3.30.70.870:FF:000004">
    <property type="entry name" value="Translation factor GUF1, mitochondrial"/>
    <property type="match status" value="1"/>
</dbReference>
<dbReference type="Gene3D" id="3.30.70.240">
    <property type="match status" value="1"/>
</dbReference>
<dbReference type="Gene3D" id="3.30.70.2570">
    <property type="entry name" value="Elongation factor 4, C-terminal domain"/>
    <property type="match status" value="1"/>
</dbReference>
<dbReference type="Gene3D" id="3.30.70.870">
    <property type="entry name" value="Elongation Factor G (Translational Gtpase), domain 3"/>
    <property type="match status" value="1"/>
</dbReference>
<dbReference type="Gene3D" id="3.40.50.300">
    <property type="entry name" value="P-loop containing nucleotide triphosphate hydrolases"/>
    <property type="match status" value="1"/>
</dbReference>
<dbReference type="Gene3D" id="2.40.30.10">
    <property type="entry name" value="Translation factors"/>
    <property type="match status" value="1"/>
</dbReference>
<dbReference type="HAMAP" id="MF_00071">
    <property type="entry name" value="LepA"/>
    <property type="match status" value="1"/>
</dbReference>
<dbReference type="InterPro" id="IPR006297">
    <property type="entry name" value="EF-4"/>
</dbReference>
<dbReference type="InterPro" id="IPR035647">
    <property type="entry name" value="EFG_III/V"/>
</dbReference>
<dbReference type="InterPro" id="IPR000640">
    <property type="entry name" value="EFG_V-like"/>
</dbReference>
<dbReference type="InterPro" id="IPR004161">
    <property type="entry name" value="EFTu-like_2"/>
</dbReference>
<dbReference type="InterPro" id="IPR031157">
    <property type="entry name" value="G_TR_CS"/>
</dbReference>
<dbReference type="InterPro" id="IPR038363">
    <property type="entry name" value="LepA_C_sf"/>
</dbReference>
<dbReference type="InterPro" id="IPR013842">
    <property type="entry name" value="LepA_CTD"/>
</dbReference>
<dbReference type="InterPro" id="IPR035654">
    <property type="entry name" value="LepA_IV"/>
</dbReference>
<dbReference type="InterPro" id="IPR027417">
    <property type="entry name" value="P-loop_NTPase"/>
</dbReference>
<dbReference type="InterPro" id="IPR005225">
    <property type="entry name" value="Small_GTP-bd"/>
</dbReference>
<dbReference type="InterPro" id="IPR000795">
    <property type="entry name" value="T_Tr_GTP-bd_dom"/>
</dbReference>
<dbReference type="NCBIfam" id="TIGR01393">
    <property type="entry name" value="lepA"/>
    <property type="match status" value="1"/>
</dbReference>
<dbReference type="NCBIfam" id="TIGR00231">
    <property type="entry name" value="small_GTP"/>
    <property type="match status" value="1"/>
</dbReference>
<dbReference type="PANTHER" id="PTHR43512:SF4">
    <property type="entry name" value="TRANSLATION FACTOR GUF1 HOMOLOG, CHLOROPLASTIC"/>
    <property type="match status" value="1"/>
</dbReference>
<dbReference type="PANTHER" id="PTHR43512">
    <property type="entry name" value="TRANSLATION FACTOR GUF1-RELATED"/>
    <property type="match status" value="1"/>
</dbReference>
<dbReference type="Pfam" id="PF00679">
    <property type="entry name" value="EFG_C"/>
    <property type="match status" value="1"/>
</dbReference>
<dbReference type="Pfam" id="PF00009">
    <property type="entry name" value="GTP_EFTU"/>
    <property type="match status" value="1"/>
</dbReference>
<dbReference type="Pfam" id="PF03144">
    <property type="entry name" value="GTP_EFTU_D2"/>
    <property type="match status" value="1"/>
</dbReference>
<dbReference type="Pfam" id="PF06421">
    <property type="entry name" value="LepA_C"/>
    <property type="match status" value="1"/>
</dbReference>
<dbReference type="PRINTS" id="PR00315">
    <property type="entry name" value="ELONGATNFCT"/>
</dbReference>
<dbReference type="SUPFAM" id="SSF54980">
    <property type="entry name" value="EF-G C-terminal domain-like"/>
    <property type="match status" value="2"/>
</dbReference>
<dbReference type="SUPFAM" id="SSF52540">
    <property type="entry name" value="P-loop containing nucleoside triphosphate hydrolases"/>
    <property type="match status" value="1"/>
</dbReference>
<dbReference type="PROSITE" id="PS00301">
    <property type="entry name" value="G_TR_1"/>
    <property type="match status" value="1"/>
</dbReference>
<dbReference type="PROSITE" id="PS51722">
    <property type="entry name" value="G_TR_2"/>
    <property type="match status" value="1"/>
</dbReference>
<comment type="function">
    <text evidence="1">Required for accurate and efficient protein synthesis under certain stress conditions. May act as a fidelity factor of the translation reaction, by catalyzing a one-codon backward translocation of tRNAs on improperly translocated ribosomes. Back-translocation proceeds from a post-translocation (POST) complex to a pre-translocation (PRE) complex, thus giving elongation factor G a second chance to translocate the tRNAs correctly. Binds to ribosomes in a GTP-dependent manner.</text>
</comment>
<comment type="catalytic activity">
    <reaction evidence="1">
        <text>GTP + H2O = GDP + phosphate + H(+)</text>
        <dbReference type="Rhea" id="RHEA:19669"/>
        <dbReference type="ChEBI" id="CHEBI:15377"/>
        <dbReference type="ChEBI" id="CHEBI:15378"/>
        <dbReference type="ChEBI" id="CHEBI:37565"/>
        <dbReference type="ChEBI" id="CHEBI:43474"/>
        <dbReference type="ChEBI" id="CHEBI:58189"/>
        <dbReference type="EC" id="3.6.5.n1"/>
    </reaction>
</comment>
<comment type="subcellular location">
    <subcellularLocation>
        <location evidence="1">Cell inner membrane</location>
        <topology evidence="1">Peripheral membrane protein</topology>
        <orientation evidence="1">Cytoplasmic side</orientation>
    </subcellularLocation>
</comment>
<comment type="similarity">
    <text evidence="1">Belongs to the TRAFAC class translation factor GTPase superfamily. Classic translation factor GTPase family. LepA subfamily.</text>
</comment>
<organism>
    <name type="scientific">Pasteurella multocida (strain Pm70)</name>
    <dbReference type="NCBI Taxonomy" id="272843"/>
    <lineage>
        <taxon>Bacteria</taxon>
        <taxon>Pseudomonadati</taxon>
        <taxon>Pseudomonadota</taxon>
        <taxon>Gammaproteobacteria</taxon>
        <taxon>Pasteurellales</taxon>
        <taxon>Pasteurellaceae</taxon>
        <taxon>Pasteurella</taxon>
    </lineage>
</organism>
<name>LEPA_PASMU</name>
<keyword id="KW-0997">Cell inner membrane</keyword>
<keyword id="KW-1003">Cell membrane</keyword>
<keyword id="KW-0342">GTP-binding</keyword>
<keyword id="KW-0378">Hydrolase</keyword>
<keyword id="KW-0472">Membrane</keyword>
<keyword id="KW-0547">Nucleotide-binding</keyword>
<keyword id="KW-0648">Protein biosynthesis</keyword>
<keyword id="KW-1185">Reference proteome</keyword>
<proteinExistence type="inferred from homology"/>
<accession>P57806</accession>
<reference key="1">
    <citation type="journal article" date="2001" name="Proc. Natl. Acad. Sci. U.S.A.">
        <title>Complete genomic sequence of Pasteurella multocida Pm70.</title>
        <authorList>
            <person name="May B.J."/>
            <person name="Zhang Q."/>
            <person name="Li L.L."/>
            <person name="Paustian M.L."/>
            <person name="Whittam T.S."/>
            <person name="Kapur V."/>
        </authorList>
    </citation>
    <scope>NUCLEOTIDE SEQUENCE [LARGE SCALE GENOMIC DNA]</scope>
    <source>
        <strain>Pm70</strain>
    </source>
</reference>